<evidence type="ECO:0000255" key="1">
    <source>
        <dbReference type="HAMAP-Rule" id="MF_00198"/>
    </source>
</evidence>
<evidence type="ECO:0000269" key="2">
    <source>
    </source>
</evidence>
<evidence type="ECO:0000269" key="3">
    <source>
    </source>
</evidence>
<evidence type="ECO:0000269" key="4">
    <source>
    </source>
</evidence>
<evidence type="ECO:0000303" key="5">
    <source>
    </source>
</evidence>
<evidence type="ECO:0000303" key="6">
    <source>
    </source>
</evidence>
<evidence type="ECO:0000305" key="7">
    <source>
    </source>
</evidence>
<evidence type="ECO:0007829" key="8">
    <source>
        <dbReference type="PDB" id="1INL"/>
    </source>
</evidence>
<evidence type="ECO:0007829" key="9">
    <source>
        <dbReference type="PDB" id="1JQ3"/>
    </source>
</evidence>
<reference key="1">
    <citation type="journal article" date="1999" name="Nature">
        <title>Evidence for lateral gene transfer between Archaea and Bacteria from genome sequence of Thermotoga maritima.</title>
        <authorList>
            <person name="Nelson K.E."/>
            <person name="Clayton R.A."/>
            <person name="Gill S.R."/>
            <person name="Gwinn M.L."/>
            <person name="Dodson R.J."/>
            <person name="Haft D.H."/>
            <person name="Hickey E.K."/>
            <person name="Peterson J.D."/>
            <person name="Nelson W.C."/>
            <person name="Ketchum K.A."/>
            <person name="McDonald L.A."/>
            <person name="Utterback T.R."/>
            <person name="Malek J.A."/>
            <person name="Linher K.D."/>
            <person name="Garrett M.M."/>
            <person name="Stewart A.M."/>
            <person name="Cotton M.D."/>
            <person name="Pratt M.S."/>
            <person name="Phillips C.A."/>
            <person name="Richardson D.L."/>
            <person name="Heidelberg J.F."/>
            <person name="Sutton G.G."/>
            <person name="Fleischmann R.D."/>
            <person name="Eisen J.A."/>
            <person name="White O."/>
            <person name="Salzberg S.L."/>
            <person name="Smith H.O."/>
            <person name="Venter J.C."/>
            <person name="Fraser C.M."/>
        </authorList>
    </citation>
    <scope>NUCLEOTIDE SEQUENCE [LARGE SCALE GENOMIC DNA]</scope>
    <source>
        <strain>ATCC 43589 / DSM 3109 / JCM 10099 / NBRC 100826 / MSB8</strain>
    </source>
</reference>
<reference key="2">
    <citation type="journal article" date="1995" name="Int. J. Biochem. Cell Biol.">
        <title>Use of aminopropyltransferase inhibitors and of non-metabolizable analogs to study polyamine regulation and function.</title>
        <authorList>
            <person name="Pegg A.E."/>
            <person name="Poulin R."/>
            <person name="Coward J.K."/>
        </authorList>
    </citation>
    <scope>ACTIVITY REGULATION</scope>
</reference>
<reference key="3">
    <citation type="journal article" date="2007" name="Biochemistry">
        <title>Structure and mechanism of spermidine synthases.</title>
        <authorList>
            <person name="Wu H."/>
            <person name="Min J."/>
            <person name="Ikeguchi Y."/>
            <person name="Zeng H."/>
            <person name="Dong A."/>
            <person name="Loppnau P."/>
            <person name="Pegg A.E."/>
            <person name="Plotnikov A.N."/>
        </authorList>
    </citation>
    <scope>FUNCTION</scope>
    <scope>CATALYTIC ACTIVITY</scope>
    <scope>MUTAGENESIS OF TYR-76; ASP-101; ASP-170 AND ASP-173</scope>
    <scope>BIOPHYSICOCHEMICAL PROPERTIES</scope>
    <scope>SUBSTRATE SPECIFICITY</scope>
</reference>
<reference key="4">
    <citation type="journal article" date="2002" name="Nat. Struct. Biol.">
        <title>The crystal structure of spermidine synthase with a multisubstrate adduct inhibitor.</title>
        <authorList>
            <person name="Korolev S."/>
            <person name="Ikeguchi Y."/>
            <person name="Skarina T."/>
            <person name="Beasley S."/>
            <person name="Arrowsmith C."/>
            <person name="Edwards A."/>
            <person name="Joachimiak A."/>
            <person name="Pegg A.E."/>
            <person name="Savchenko A."/>
        </authorList>
    </citation>
    <scope>X-RAY CRYSTALLOGRAPHY (1.5 ANGSTROMS) OF APOENZYME AND COMPLEX WITH SUBSTRATE ANALOG</scope>
    <scope>FUNCTION</scope>
    <scope>CATALYTIC ACTIVITY</scope>
    <scope>ACTIVE SITE</scope>
    <scope>BIOPHYSICOCHEMICAL PROPERTIES</scope>
    <scope>SUBUNIT</scope>
</reference>
<sequence>MRTLKELERELQPRQHLWYFEYYTGNNVGLFMKMNRVIYSGQSDIQRIDIFENPDLGVVFALDGITMTTEKDEFMYHEMLAHVPMFLHPNPKKVLIIGGGDGGTLREVLKHDSVEKAILCEVDGLVIEAARKYLKQTSCGFDDPRAEIVIANGAEYVRKFKNEFDVIIIDSTDPTAGQGGHLFTEEFYQACYDALKEDGVFSAETEDPFYDIGWFKLAYRRISKVFPITRVYLGFMTTYPSGMWSYTFASKGIDPIKDFDPEKVRKFNKELKYYNEEVHVASFALPNFVKKELGLM</sequence>
<gene>
    <name evidence="1" type="primary">speE</name>
    <name type="ordered locus">TM_0654</name>
</gene>
<accession>Q9WZC2</accession>
<feature type="chain" id="PRO_0000156513" description="Polyamine aminopropyltransferase">
    <location>
        <begin position="1"/>
        <end position="296"/>
    </location>
</feature>
<feature type="domain" description="PABS" evidence="1">
    <location>
        <begin position="16"/>
        <end position="251"/>
    </location>
</feature>
<feature type="active site" description="Proton acceptor" evidence="1 7">
    <location>
        <position position="170"/>
    </location>
</feature>
<feature type="binding site" evidence="2">
    <location>
        <position position="46"/>
    </location>
    <ligand>
        <name>S-methyl-5'-thioadenosine</name>
        <dbReference type="ChEBI" id="CHEBI:17509"/>
    </ligand>
</feature>
<feature type="binding site" evidence="2">
    <location>
        <position position="77"/>
    </location>
    <ligand>
        <name>spermidine</name>
        <dbReference type="ChEBI" id="CHEBI:57834"/>
    </ligand>
</feature>
<feature type="binding site" evidence="2">
    <location>
        <position position="101"/>
    </location>
    <ligand>
        <name>spermidine</name>
        <dbReference type="ChEBI" id="CHEBI:57834"/>
    </ligand>
</feature>
<feature type="binding site" evidence="2">
    <location>
        <position position="121"/>
    </location>
    <ligand>
        <name>S-methyl-5'-thioadenosine</name>
        <dbReference type="ChEBI" id="CHEBI:17509"/>
    </ligand>
</feature>
<feature type="binding site" evidence="2">
    <location>
        <begin position="152"/>
        <end position="153"/>
    </location>
    <ligand>
        <name>S-methyl-5'-thioadenosine</name>
        <dbReference type="ChEBI" id="CHEBI:17509"/>
    </ligand>
</feature>
<feature type="binding site" evidence="2">
    <location>
        <begin position="170"/>
        <end position="173"/>
    </location>
    <ligand>
        <name>spermidine</name>
        <dbReference type="ChEBI" id="CHEBI:57834"/>
    </ligand>
</feature>
<feature type="mutagenesis site" description="Reduces enzyme activity about 1000-fold." evidence="3">
    <original>Y</original>
    <variation>F</variation>
    <location>
        <position position="76"/>
    </location>
</feature>
<feature type="mutagenesis site" description="Reduces enzyme activity over 10000-fold." evidence="3">
    <original>D</original>
    <variation>I</variation>
    <location>
        <position position="101"/>
    </location>
</feature>
<feature type="mutagenesis site" description="Reduces enzyme activity over 10000-fold." evidence="3">
    <original>D</original>
    <variation>A</variation>
    <location>
        <position position="170"/>
    </location>
</feature>
<feature type="mutagenesis site" description="Reduces enzyme activity about 500-fold." evidence="3">
    <original>D</original>
    <variation>A</variation>
    <location>
        <position position="173"/>
    </location>
</feature>
<feature type="helix" evidence="8">
    <location>
        <begin position="4"/>
        <end position="7"/>
    </location>
</feature>
<feature type="strand" evidence="8">
    <location>
        <begin position="15"/>
        <end position="22"/>
    </location>
</feature>
<feature type="strand" evidence="8">
    <location>
        <begin position="26"/>
        <end position="33"/>
    </location>
</feature>
<feature type="strand" evidence="8">
    <location>
        <begin position="35"/>
        <end position="42"/>
    </location>
</feature>
<feature type="strand" evidence="8">
    <location>
        <begin position="47"/>
        <end position="53"/>
    </location>
</feature>
<feature type="turn" evidence="8">
    <location>
        <begin position="54"/>
        <end position="56"/>
    </location>
</feature>
<feature type="strand" evidence="8">
    <location>
        <begin position="57"/>
        <end position="62"/>
    </location>
</feature>
<feature type="strand" evidence="8">
    <location>
        <begin position="65"/>
        <end position="69"/>
    </location>
</feature>
<feature type="turn" evidence="8">
    <location>
        <begin position="70"/>
        <end position="72"/>
    </location>
</feature>
<feature type="helix" evidence="8">
    <location>
        <begin position="73"/>
        <end position="87"/>
    </location>
</feature>
<feature type="strand" evidence="8">
    <location>
        <begin position="88"/>
        <end position="90"/>
    </location>
</feature>
<feature type="strand" evidence="8">
    <location>
        <begin position="93"/>
        <end position="98"/>
    </location>
</feature>
<feature type="helix" evidence="8">
    <location>
        <begin position="103"/>
        <end position="108"/>
    </location>
</feature>
<feature type="strand" evidence="8">
    <location>
        <begin position="115"/>
        <end position="122"/>
    </location>
</feature>
<feature type="helix" evidence="8">
    <location>
        <begin position="124"/>
        <end position="133"/>
    </location>
</feature>
<feature type="helix" evidence="8">
    <location>
        <begin position="135"/>
        <end position="138"/>
    </location>
</feature>
<feature type="helix" evidence="8">
    <location>
        <begin position="139"/>
        <end position="142"/>
    </location>
</feature>
<feature type="strand" evidence="8">
    <location>
        <begin position="146"/>
        <end position="151"/>
    </location>
</feature>
<feature type="helix" evidence="8">
    <location>
        <begin position="153"/>
        <end position="156"/>
    </location>
</feature>
<feature type="helix" evidence="8">
    <location>
        <begin position="157"/>
        <end position="159"/>
    </location>
</feature>
<feature type="strand" evidence="8">
    <location>
        <begin position="164"/>
        <end position="170"/>
    </location>
</feature>
<feature type="helix" evidence="8">
    <location>
        <begin position="177"/>
        <end position="179"/>
    </location>
</feature>
<feature type="helix" evidence="9">
    <location>
        <begin position="181"/>
        <end position="183"/>
    </location>
</feature>
<feature type="helix" evidence="8">
    <location>
        <begin position="185"/>
        <end position="194"/>
    </location>
</feature>
<feature type="strand" evidence="8">
    <location>
        <begin position="195"/>
        <end position="204"/>
    </location>
</feature>
<feature type="turn" evidence="8">
    <location>
        <begin position="208"/>
        <end position="211"/>
    </location>
</feature>
<feature type="helix" evidence="8">
    <location>
        <begin position="212"/>
        <end position="225"/>
    </location>
</feature>
<feature type="strand" evidence="8">
    <location>
        <begin position="227"/>
        <end position="235"/>
    </location>
</feature>
<feature type="strand" evidence="8">
    <location>
        <begin position="242"/>
        <end position="252"/>
    </location>
</feature>
<feature type="turn" evidence="8">
    <location>
        <begin position="255"/>
        <end position="258"/>
    </location>
</feature>
<feature type="helix" evidence="8">
    <location>
        <begin position="261"/>
        <end position="265"/>
    </location>
</feature>
<feature type="helix" evidence="8">
    <location>
        <begin position="276"/>
        <end position="281"/>
    </location>
</feature>
<feature type="helix" evidence="8">
    <location>
        <begin position="287"/>
        <end position="292"/>
    </location>
</feature>
<proteinExistence type="evidence at protein level"/>
<comment type="function">
    <text evidence="1 2 3">Catalyzes the irreversible transfer of a propylamine group from the amino donor S-adenosylmethioninamine (decarboxy-AdoMet) to putrescine (1,4-diaminobutane) to yield spermidine. It has lower affinity and lower activity towards 1,3-diaminopropane, cadaverine (1,5-diaminopentane), agmatine, norspermidine and spermidine (in vitro).</text>
</comment>
<comment type="catalytic activity">
    <reaction evidence="1 2 3">
        <text>S-adenosyl 3-(methylsulfanyl)propylamine + putrescine = S-methyl-5'-thioadenosine + spermidine + H(+)</text>
        <dbReference type="Rhea" id="RHEA:12721"/>
        <dbReference type="ChEBI" id="CHEBI:15378"/>
        <dbReference type="ChEBI" id="CHEBI:17509"/>
        <dbReference type="ChEBI" id="CHEBI:57443"/>
        <dbReference type="ChEBI" id="CHEBI:57834"/>
        <dbReference type="ChEBI" id="CHEBI:326268"/>
        <dbReference type="EC" id="2.5.1.16"/>
    </reaction>
</comment>
<comment type="activity regulation">
    <text evidence="4">Strongly inhibited by S-adenosyl-1,8-diamino-3-thiooctane.</text>
</comment>
<comment type="biophysicochemical properties">
    <kinetics>
        <KM evidence="3">0.75 uM for S-adenosylmethioninamine (at pH 7.5 and 37 degrees Celsius)</KM>
        <KM evidence="3">19 uM for putrescine (at pH 7.5 and 37 degrees Celsius)</KM>
        <text evidence="3">kcat is 0.77 sec(-1) for aminopropyltransferase activity with putrescine as substrate (at pH 7.5 and 37 degrees Celsius). kcat is 22.7 sec(-1) for aminopropyltransferase activity with putrescine as substrate (at pH 7.5 and 80 degrees Celsius).</text>
    </kinetics>
    <phDependence>
        <text evidence="2">Optimum pH is 7.5.</text>
    </phDependence>
    <temperatureDependence>
        <text evidence="2">Optimum temperature is 90 degrees Celsius.</text>
    </temperatureDependence>
</comment>
<comment type="pathway">
    <text evidence="1">Amine and polyamine biosynthesis; spermidine biosynthesis; spermidine from putrescine: step 1/1.</text>
</comment>
<comment type="subunit">
    <text evidence="2">Homotetramer.</text>
</comment>
<comment type="subcellular location">
    <subcellularLocation>
        <location evidence="1">Cytoplasm</location>
    </subcellularLocation>
</comment>
<comment type="similarity">
    <text evidence="1">Belongs to the spermidine/spermine synthase family.</text>
</comment>
<organism>
    <name type="scientific">Thermotoga maritima (strain ATCC 43589 / DSM 3109 / JCM 10099 / NBRC 100826 / MSB8)</name>
    <dbReference type="NCBI Taxonomy" id="243274"/>
    <lineage>
        <taxon>Bacteria</taxon>
        <taxon>Thermotogati</taxon>
        <taxon>Thermotogota</taxon>
        <taxon>Thermotogae</taxon>
        <taxon>Thermotogales</taxon>
        <taxon>Thermotogaceae</taxon>
        <taxon>Thermotoga</taxon>
    </lineage>
</organism>
<keyword id="KW-0002">3D-structure</keyword>
<keyword id="KW-0963">Cytoplasm</keyword>
<keyword id="KW-0620">Polyamine biosynthesis</keyword>
<keyword id="KW-1185">Reference proteome</keyword>
<keyword id="KW-0745">Spermidine biosynthesis</keyword>
<keyword id="KW-0808">Transferase</keyword>
<dbReference type="EC" id="2.5.1.16" evidence="1 2 3"/>
<dbReference type="EMBL" id="AE000512">
    <property type="protein sequence ID" value="AAD35738.1"/>
    <property type="molecule type" value="Genomic_DNA"/>
</dbReference>
<dbReference type="PIR" id="C72348">
    <property type="entry name" value="C72348"/>
</dbReference>
<dbReference type="RefSeq" id="NP_228463.1">
    <property type="nucleotide sequence ID" value="NC_000853.1"/>
</dbReference>
<dbReference type="PDB" id="1INL">
    <property type="method" value="X-ray"/>
    <property type="resolution" value="1.50 A"/>
    <property type="chains" value="A/B/C/D=1-296"/>
</dbReference>
<dbReference type="PDB" id="1JQ3">
    <property type="method" value="X-ray"/>
    <property type="resolution" value="1.80 A"/>
    <property type="chains" value="A/B/C/D=1-296"/>
</dbReference>
<dbReference type="PDBsum" id="1INL"/>
<dbReference type="PDBsum" id="1JQ3"/>
<dbReference type="SMR" id="Q9WZC2"/>
<dbReference type="FunCoup" id="Q9WZC2">
    <property type="interactions" value="271"/>
</dbReference>
<dbReference type="STRING" id="243274.TM_0654"/>
<dbReference type="DrugBank" id="DB02844">
    <property type="generic name" value="S-Adenosyl-1,8-Diamino-3-Thiooctane"/>
</dbReference>
<dbReference type="PaxDb" id="243274-THEMA_01395"/>
<dbReference type="EnsemblBacteria" id="AAD35738">
    <property type="protein sequence ID" value="AAD35738"/>
    <property type="gene ID" value="TM_0654"/>
</dbReference>
<dbReference type="KEGG" id="tma:TM0654"/>
<dbReference type="KEGG" id="tmi:THEMA_01395"/>
<dbReference type="PATRIC" id="fig|243274.18.peg.273"/>
<dbReference type="eggNOG" id="COG0421">
    <property type="taxonomic scope" value="Bacteria"/>
</dbReference>
<dbReference type="InParanoid" id="Q9WZC2"/>
<dbReference type="OrthoDB" id="9793120at2"/>
<dbReference type="BRENDA" id="2.5.1.16">
    <property type="organism ID" value="6331"/>
</dbReference>
<dbReference type="SABIO-RK" id="Q9WZC2"/>
<dbReference type="UniPathway" id="UPA00248">
    <property type="reaction ID" value="UER00314"/>
</dbReference>
<dbReference type="EvolutionaryTrace" id="Q9WZC2"/>
<dbReference type="Proteomes" id="UP000008183">
    <property type="component" value="Chromosome"/>
</dbReference>
<dbReference type="GO" id="GO:0005829">
    <property type="term" value="C:cytosol"/>
    <property type="evidence" value="ECO:0000318"/>
    <property type="project" value="GO_Central"/>
</dbReference>
<dbReference type="GO" id="GO:0043919">
    <property type="term" value="F:agmatine aminopropyltransferase activity"/>
    <property type="evidence" value="ECO:0000314"/>
    <property type="project" value="UniProtKB"/>
</dbReference>
<dbReference type="GO" id="GO:0043918">
    <property type="term" value="F:cadaverine aminopropyltransferase activity"/>
    <property type="evidence" value="ECO:0000314"/>
    <property type="project" value="UniProtKB"/>
</dbReference>
<dbReference type="GO" id="GO:0004766">
    <property type="term" value="F:spermidine synthase activity"/>
    <property type="evidence" value="ECO:0000314"/>
    <property type="project" value="UniProtKB"/>
</dbReference>
<dbReference type="GO" id="GO:0050314">
    <property type="term" value="F:sym-norspermidine synthase activity"/>
    <property type="evidence" value="ECO:0000314"/>
    <property type="project" value="UniProtKB"/>
</dbReference>
<dbReference type="GO" id="GO:0010487">
    <property type="term" value="F:thermospermine synthase activity"/>
    <property type="evidence" value="ECO:0000314"/>
    <property type="project" value="UniProtKB"/>
</dbReference>
<dbReference type="GO" id="GO:0008295">
    <property type="term" value="P:spermidine biosynthetic process"/>
    <property type="evidence" value="ECO:0000314"/>
    <property type="project" value="UniProtKB"/>
</dbReference>
<dbReference type="CDD" id="cd02440">
    <property type="entry name" value="AdoMet_MTases"/>
    <property type="match status" value="1"/>
</dbReference>
<dbReference type="FunFam" id="3.40.50.150:FF:000731">
    <property type="entry name" value="Polyamine aminopropyltransferase"/>
    <property type="match status" value="1"/>
</dbReference>
<dbReference type="Gene3D" id="2.30.140.10">
    <property type="entry name" value="Spermidine synthase, tetramerisation domain"/>
    <property type="match status" value="1"/>
</dbReference>
<dbReference type="Gene3D" id="3.40.50.150">
    <property type="entry name" value="Vaccinia Virus protein VP39"/>
    <property type="match status" value="1"/>
</dbReference>
<dbReference type="HAMAP" id="MF_00198">
    <property type="entry name" value="Spermidine_synth"/>
    <property type="match status" value="1"/>
</dbReference>
<dbReference type="InterPro" id="IPR030374">
    <property type="entry name" value="PABS"/>
</dbReference>
<dbReference type="InterPro" id="IPR030373">
    <property type="entry name" value="PABS_CS"/>
</dbReference>
<dbReference type="InterPro" id="IPR029063">
    <property type="entry name" value="SAM-dependent_MTases_sf"/>
</dbReference>
<dbReference type="InterPro" id="IPR001045">
    <property type="entry name" value="Spermi_synthase"/>
</dbReference>
<dbReference type="InterPro" id="IPR035246">
    <property type="entry name" value="Spermidine_synt_N"/>
</dbReference>
<dbReference type="InterPro" id="IPR037163">
    <property type="entry name" value="Spermidine_synt_N_sf"/>
</dbReference>
<dbReference type="NCBIfam" id="NF037959">
    <property type="entry name" value="MFS_SpdSyn"/>
    <property type="match status" value="1"/>
</dbReference>
<dbReference type="NCBIfam" id="NF002010">
    <property type="entry name" value="PRK00811.1"/>
    <property type="match status" value="1"/>
</dbReference>
<dbReference type="NCBIfam" id="TIGR00417">
    <property type="entry name" value="speE"/>
    <property type="match status" value="1"/>
</dbReference>
<dbReference type="PANTHER" id="PTHR11558:SF11">
    <property type="entry name" value="SPERMIDINE SYNTHASE"/>
    <property type="match status" value="1"/>
</dbReference>
<dbReference type="PANTHER" id="PTHR11558">
    <property type="entry name" value="SPERMIDINE/SPERMINE SYNTHASE"/>
    <property type="match status" value="1"/>
</dbReference>
<dbReference type="Pfam" id="PF17284">
    <property type="entry name" value="Spermine_synt_N"/>
    <property type="match status" value="1"/>
</dbReference>
<dbReference type="Pfam" id="PF01564">
    <property type="entry name" value="Spermine_synth"/>
    <property type="match status" value="1"/>
</dbReference>
<dbReference type="SUPFAM" id="SSF53335">
    <property type="entry name" value="S-adenosyl-L-methionine-dependent methyltransferases"/>
    <property type="match status" value="1"/>
</dbReference>
<dbReference type="PROSITE" id="PS01330">
    <property type="entry name" value="PABS_1"/>
    <property type="match status" value="1"/>
</dbReference>
<dbReference type="PROSITE" id="PS51006">
    <property type="entry name" value="PABS_2"/>
    <property type="match status" value="1"/>
</dbReference>
<name>SPEE_THEMA</name>
<protein>
    <recommendedName>
        <fullName evidence="1 5">Polyamine aminopropyltransferase</fullName>
    </recommendedName>
    <alternativeName>
        <fullName evidence="1 5">Putrescine aminopropyltransferase</fullName>
        <shortName evidence="1 5">PAPT</shortName>
    </alternativeName>
    <alternativeName>
        <fullName evidence="1 6">Spermidine synthase</fullName>
        <shortName evidence="1 6">SPDS</shortName>
        <shortName evidence="1 6">SPDSY</shortName>
        <ecNumber evidence="1 2 3">2.5.1.16</ecNumber>
    </alternativeName>
</protein>